<reference key="1">
    <citation type="journal article" date="2007" name="BMC Plant Biol.">
        <title>Complete DNA sequences of the plastid genomes of two parasitic flowering plant species, Cuscuta reflexa and Cuscuta gronovii.</title>
        <authorList>
            <person name="Funk H.T."/>
            <person name="Berg S."/>
            <person name="Krupinska K."/>
            <person name="Maier U.-G."/>
            <person name="Krause K."/>
        </authorList>
    </citation>
    <scope>NUCLEOTIDE SEQUENCE [LARGE SCALE GENOMIC DNA]</scope>
</reference>
<geneLocation type="plastid"/>
<protein>
    <recommendedName>
        <fullName evidence="1">Small ribosomal subunit protein uS19c</fullName>
    </recommendedName>
    <alternativeName>
        <fullName evidence="2">30S ribosomal protein S19, plastid</fullName>
    </alternativeName>
</protein>
<accession>A7M936</accession>
<evidence type="ECO:0000255" key="1">
    <source>
        <dbReference type="HAMAP-Rule" id="MF_00531"/>
    </source>
</evidence>
<evidence type="ECO:0000305" key="2"/>
<keyword id="KW-0934">Plastid</keyword>
<keyword id="KW-0687">Ribonucleoprotein</keyword>
<keyword id="KW-0689">Ribosomal protein</keyword>
<keyword id="KW-0694">RNA-binding</keyword>
<keyword id="KW-0699">rRNA-binding</keyword>
<comment type="function">
    <text evidence="1">Protein S19 forms a complex with S13 that binds strongly to the 16S ribosomal RNA.</text>
</comment>
<comment type="subcellular location">
    <subcellularLocation>
        <location>Plastid</location>
    </subcellularLocation>
</comment>
<comment type="similarity">
    <text evidence="1">Belongs to the universal ribosomal protein uS19 family.</text>
</comment>
<comment type="caution">
    <text evidence="2">Young tissue from this organism is photosynthetic and contains some thylakoids, although the photosynthetic activity does not exceed the light compensation point.</text>
</comment>
<proteinExistence type="inferred from homology"/>
<dbReference type="EMBL" id="AM711639">
    <property type="protein sequence ID" value="CAM98364.1"/>
    <property type="molecule type" value="Genomic_DNA"/>
</dbReference>
<dbReference type="RefSeq" id="YP_001430077.1">
    <property type="nucleotide sequence ID" value="NC_009765.1"/>
</dbReference>
<dbReference type="SMR" id="A7M936"/>
<dbReference type="GeneID" id="5536747"/>
<dbReference type="GO" id="GO:0005763">
    <property type="term" value="C:mitochondrial small ribosomal subunit"/>
    <property type="evidence" value="ECO:0007669"/>
    <property type="project" value="TreeGrafter"/>
</dbReference>
<dbReference type="GO" id="GO:0009536">
    <property type="term" value="C:plastid"/>
    <property type="evidence" value="ECO:0007669"/>
    <property type="project" value="UniProtKB-SubCell"/>
</dbReference>
<dbReference type="GO" id="GO:0019843">
    <property type="term" value="F:rRNA binding"/>
    <property type="evidence" value="ECO:0007669"/>
    <property type="project" value="UniProtKB-KW"/>
</dbReference>
<dbReference type="GO" id="GO:0003735">
    <property type="term" value="F:structural constituent of ribosome"/>
    <property type="evidence" value="ECO:0007669"/>
    <property type="project" value="InterPro"/>
</dbReference>
<dbReference type="GO" id="GO:0000028">
    <property type="term" value="P:ribosomal small subunit assembly"/>
    <property type="evidence" value="ECO:0007669"/>
    <property type="project" value="TreeGrafter"/>
</dbReference>
<dbReference type="GO" id="GO:0006412">
    <property type="term" value="P:translation"/>
    <property type="evidence" value="ECO:0007669"/>
    <property type="project" value="InterPro"/>
</dbReference>
<dbReference type="FunFam" id="3.30.860.10:FF:000001">
    <property type="entry name" value="30S ribosomal protein S19"/>
    <property type="match status" value="1"/>
</dbReference>
<dbReference type="Gene3D" id="3.30.860.10">
    <property type="entry name" value="30s Ribosomal Protein S19, Chain A"/>
    <property type="match status" value="1"/>
</dbReference>
<dbReference type="HAMAP" id="MF_00531">
    <property type="entry name" value="Ribosomal_uS19"/>
    <property type="match status" value="1"/>
</dbReference>
<dbReference type="InterPro" id="IPR002222">
    <property type="entry name" value="Ribosomal_uS19"/>
</dbReference>
<dbReference type="InterPro" id="IPR005732">
    <property type="entry name" value="Ribosomal_uS19_bac-type"/>
</dbReference>
<dbReference type="InterPro" id="IPR020934">
    <property type="entry name" value="Ribosomal_uS19_CS"/>
</dbReference>
<dbReference type="InterPro" id="IPR023575">
    <property type="entry name" value="Ribosomal_uS19_SF"/>
</dbReference>
<dbReference type="NCBIfam" id="TIGR01050">
    <property type="entry name" value="rpsS_bact"/>
    <property type="match status" value="1"/>
</dbReference>
<dbReference type="PANTHER" id="PTHR11880">
    <property type="entry name" value="RIBOSOMAL PROTEIN S19P FAMILY MEMBER"/>
    <property type="match status" value="1"/>
</dbReference>
<dbReference type="PANTHER" id="PTHR11880:SF8">
    <property type="entry name" value="SMALL RIBOSOMAL SUBUNIT PROTEIN US19M"/>
    <property type="match status" value="1"/>
</dbReference>
<dbReference type="Pfam" id="PF00203">
    <property type="entry name" value="Ribosomal_S19"/>
    <property type="match status" value="1"/>
</dbReference>
<dbReference type="PIRSF" id="PIRSF002144">
    <property type="entry name" value="Ribosomal_S19"/>
    <property type="match status" value="1"/>
</dbReference>
<dbReference type="PRINTS" id="PR00975">
    <property type="entry name" value="RIBOSOMALS19"/>
</dbReference>
<dbReference type="SUPFAM" id="SSF54570">
    <property type="entry name" value="Ribosomal protein S19"/>
    <property type="match status" value="1"/>
</dbReference>
<dbReference type="PROSITE" id="PS00323">
    <property type="entry name" value="RIBOSOMAL_S19"/>
    <property type="match status" value="1"/>
</dbReference>
<feature type="chain" id="PRO_0000354347" description="Small ribosomal subunit protein uS19c">
    <location>
        <begin position="1"/>
        <end position="92"/>
    </location>
</feature>
<gene>
    <name evidence="1" type="primary">rps19</name>
</gene>
<sequence>MTYLLKKNPFVANNLLKKINKLNRKAQKEIIITWSRGSTIIPIMIGHTIAIHNGKEHLPIYIMDDMVGHKLGEFAATLNFRGHEKGDNKSRR</sequence>
<name>RR19_CUSGR</name>
<organism>
    <name type="scientific">Cuscuta gronovii</name>
    <name type="common">Common dodder</name>
    <name type="synonym">Epithymum gronovii</name>
    <dbReference type="NCBI Taxonomy" id="35886"/>
    <lineage>
        <taxon>Eukaryota</taxon>
        <taxon>Viridiplantae</taxon>
        <taxon>Streptophyta</taxon>
        <taxon>Embryophyta</taxon>
        <taxon>Tracheophyta</taxon>
        <taxon>Spermatophyta</taxon>
        <taxon>Magnoliopsida</taxon>
        <taxon>eudicotyledons</taxon>
        <taxon>Gunneridae</taxon>
        <taxon>Pentapetalae</taxon>
        <taxon>asterids</taxon>
        <taxon>lamiids</taxon>
        <taxon>Solanales</taxon>
        <taxon>Convolvulaceae</taxon>
        <taxon>Cuscuteae</taxon>
        <taxon>Cuscuta</taxon>
        <taxon>Cuscuta subgen. Grammica</taxon>
        <taxon>Cuscuta sect. Oxycarpae</taxon>
    </lineage>
</organism>